<proteinExistence type="evidence at protein level"/>
<accession>Q8TBR7</accession>
<accession>A8K7Q0</accession>
<accession>Q7Z464</accession>
<accession>Q96D97</accession>
<accession>Q9H6H3</accession>
<organism>
    <name type="scientific">Homo sapiens</name>
    <name type="common">Human</name>
    <dbReference type="NCBI Taxonomy" id="9606"/>
    <lineage>
        <taxon>Eukaryota</taxon>
        <taxon>Metazoa</taxon>
        <taxon>Chordata</taxon>
        <taxon>Craniata</taxon>
        <taxon>Vertebrata</taxon>
        <taxon>Euteleostomi</taxon>
        <taxon>Mammalia</taxon>
        <taxon>Eutheria</taxon>
        <taxon>Euarchontoglires</taxon>
        <taxon>Primates</taxon>
        <taxon>Haplorrhini</taxon>
        <taxon>Catarrhini</taxon>
        <taxon>Hominidae</taxon>
        <taxon>Homo</taxon>
    </lineage>
</organism>
<reference key="1">
    <citation type="journal article" date="2002" name="Biochem. Biophys. Res. Commun.">
        <title>Molecular cloning and characterization of CT120, a novel membrane-associated gene involved in amino acid transport and glutathione metabolism.</title>
        <authorList>
            <person name="He X.H."/>
            <person name="Di Y."/>
            <person name="Li J."/>
            <person name="Xie Y."/>
            <person name="Tang Y."/>
            <person name="Zhang F."/>
            <person name="Wei L."/>
            <person name="Zhang Y."/>
            <person name="Qin W.X."/>
            <person name="Huo K."/>
            <person name="Li Y."/>
            <person name="Wan D.F."/>
            <person name="Gu J.R."/>
        </authorList>
    </citation>
    <scope>NUCLEOTIDE SEQUENCE [MRNA] (ISOFORM 2)</scope>
    <scope>INTERACTION WITH GGT7 AND SLC3A2</scope>
    <scope>TISSUE SPECIFICITY</scope>
</reference>
<reference key="2">
    <citation type="journal article" date="2004" name="Nat. Genet.">
        <title>Complete sequencing and characterization of 21,243 full-length human cDNAs.</title>
        <authorList>
            <person name="Ota T."/>
            <person name="Suzuki Y."/>
            <person name="Nishikawa T."/>
            <person name="Otsuki T."/>
            <person name="Sugiyama T."/>
            <person name="Irie R."/>
            <person name="Wakamatsu A."/>
            <person name="Hayashi K."/>
            <person name="Sato H."/>
            <person name="Nagai K."/>
            <person name="Kimura K."/>
            <person name="Makita H."/>
            <person name="Sekine M."/>
            <person name="Obayashi M."/>
            <person name="Nishi T."/>
            <person name="Shibahara T."/>
            <person name="Tanaka T."/>
            <person name="Ishii S."/>
            <person name="Yamamoto J."/>
            <person name="Saito K."/>
            <person name="Kawai Y."/>
            <person name="Isono Y."/>
            <person name="Nakamura Y."/>
            <person name="Nagahari K."/>
            <person name="Murakami K."/>
            <person name="Yasuda T."/>
            <person name="Iwayanagi T."/>
            <person name="Wagatsuma M."/>
            <person name="Shiratori A."/>
            <person name="Sudo H."/>
            <person name="Hosoiri T."/>
            <person name="Kaku Y."/>
            <person name="Kodaira H."/>
            <person name="Kondo H."/>
            <person name="Sugawara M."/>
            <person name="Takahashi M."/>
            <person name="Kanda K."/>
            <person name="Yokoi T."/>
            <person name="Furuya T."/>
            <person name="Kikkawa E."/>
            <person name="Omura Y."/>
            <person name="Abe K."/>
            <person name="Kamihara K."/>
            <person name="Katsuta N."/>
            <person name="Sato K."/>
            <person name="Tanikawa M."/>
            <person name="Yamazaki M."/>
            <person name="Ninomiya K."/>
            <person name="Ishibashi T."/>
            <person name="Yamashita H."/>
            <person name="Murakawa K."/>
            <person name="Fujimori K."/>
            <person name="Tanai H."/>
            <person name="Kimata M."/>
            <person name="Watanabe M."/>
            <person name="Hiraoka S."/>
            <person name="Chiba Y."/>
            <person name="Ishida S."/>
            <person name="Ono Y."/>
            <person name="Takiguchi S."/>
            <person name="Watanabe S."/>
            <person name="Yosida M."/>
            <person name="Hotuta T."/>
            <person name="Kusano J."/>
            <person name="Kanehori K."/>
            <person name="Takahashi-Fujii A."/>
            <person name="Hara H."/>
            <person name="Tanase T.-O."/>
            <person name="Nomura Y."/>
            <person name="Togiya S."/>
            <person name="Komai F."/>
            <person name="Hara R."/>
            <person name="Takeuchi K."/>
            <person name="Arita M."/>
            <person name="Imose N."/>
            <person name="Musashino K."/>
            <person name="Yuuki H."/>
            <person name="Oshima A."/>
            <person name="Sasaki N."/>
            <person name="Aotsuka S."/>
            <person name="Yoshikawa Y."/>
            <person name="Matsunawa H."/>
            <person name="Ichihara T."/>
            <person name="Shiohata N."/>
            <person name="Sano S."/>
            <person name="Moriya S."/>
            <person name="Momiyama H."/>
            <person name="Satoh N."/>
            <person name="Takami S."/>
            <person name="Terashima Y."/>
            <person name="Suzuki O."/>
            <person name="Nakagawa S."/>
            <person name="Senoh A."/>
            <person name="Mizoguchi H."/>
            <person name="Goto Y."/>
            <person name="Shimizu F."/>
            <person name="Wakebe H."/>
            <person name="Hishigaki H."/>
            <person name="Watanabe T."/>
            <person name="Sugiyama A."/>
            <person name="Takemoto M."/>
            <person name="Kawakami B."/>
            <person name="Yamazaki M."/>
            <person name="Watanabe K."/>
            <person name="Kumagai A."/>
            <person name="Itakura S."/>
            <person name="Fukuzumi Y."/>
            <person name="Fujimori Y."/>
            <person name="Komiyama M."/>
            <person name="Tashiro H."/>
            <person name="Tanigami A."/>
            <person name="Fujiwara T."/>
            <person name="Ono T."/>
            <person name="Yamada K."/>
            <person name="Fujii Y."/>
            <person name="Ozaki K."/>
            <person name="Hirao M."/>
            <person name="Ohmori Y."/>
            <person name="Kawabata A."/>
            <person name="Hikiji T."/>
            <person name="Kobatake N."/>
            <person name="Inagaki H."/>
            <person name="Ikema Y."/>
            <person name="Okamoto S."/>
            <person name="Okitani R."/>
            <person name="Kawakami T."/>
            <person name="Noguchi S."/>
            <person name="Itoh T."/>
            <person name="Shigeta K."/>
            <person name="Senba T."/>
            <person name="Matsumura K."/>
            <person name="Nakajima Y."/>
            <person name="Mizuno T."/>
            <person name="Morinaga M."/>
            <person name="Sasaki M."/>
            <person name="Togashi T."/>
            <person name="Oyama M."/>
            <person name="Hata H."/>
            <person name="Watanabe M."/>
            <person name="Komatsu T."/>
            <person name="Mizushima-Sugano J."/>
            <person name="Satoh T."/>
            <person name="Shirai Y."/>
            <person name="Takahashi Y."/>
            <person name="Nakagawa K."/>
            <person name="Okumura K."/>
            <person name="Nagase T."/>
            <person name="Nomura N."/>
            <person name="Kikuchi H."/>
            <person name="Masuho Y."/>
            <person name="Yamashita R."/>
            <person name="Nakai K."/>
            <person name="Yada T."/>
            <person name="Nakamura Y."/>
            <person name="Ohara O."/>
            <person name="Isogai T."/>
            <person name="Sugano S."/>
        </authorList>
    </citation>
    <scope>NUCLEOTIDE SEQUENCE [LARGE SCALE MRNA] (ISOFORM 2)</scope>
    <source>
        <tissue>Stomach</tissue>
    </source>
</reference>
<reference key="3">
    <citation type="submission" date="2005-09" db="EMBL/GenBank/DDBJ databases">
        <authorList>
            <person name="Mural R.J."/>
            <person name="Istrail S."/>
            <person name="Sutton G.G."/>
            <person name="Florea L."/>
            <person name="Halpern A.L."/>
            <person name="Mobarry C.M."/>
            <person name="Lippert R."/>
            <person name="Walenz B."/>
            <person name="Shatkay H."/>
            <person name="Dew I."/>
            <person name="Miller J.R."/>
            <person name="Flanigan M.J."/>
            <person name="Edwards N.J."/>
            <person name="Bolanos R."/>
            <person name="Fasulo D."/>
            <person name="Halldorsson B.V."/>
            <person name="Hannenhalli S."/>
            <person name="Turner R."/>
            <person name="Yooseph S."/>
            <person name="Lu F."/>
            <person name="Nusskern D.R."/>
            <person name="Shue B.C."/>
            <person name="Zheng X.H."/>
            <person name="Zhong F."/>
            <person name="Delcher A.L."/>
            <person name="Huson D.H."/>
            <person name="Kravitz S.A."/>
            <person name="Mouchard L."/>
            <person name="Reinert K."/>
            <person name="Remington K.A."/>
            <person name="Clark A.G."/>
            <person name="Waterman M.S."/>
            <person name="Eichler E.E."/>
            <person name="Adams M.D."/>
            <person name="Hunkapiller M.W."/>
            <person name="Myers E.W."/>
            <person name="Venter J.C."/>
        </authorList>
    </citation>
    <scope>NUCLEOTIDE SEQUENCE [LARGE SCALE GENOMIC DNA]</scope>
</reference>
<reference key="4">
    <citation type="journal article" date="2004" name="Genome Res.">
        <title>The status, quality, and expansion of the NIH full-length cDNA project: the Mammalian Gene Collection (MGC).</title>
        <authorList>
            <consortium name="The MGC Project Team"/>
        </authorList>
    </citation>
    <scope>NUCLEOTIDE SEQUENCE [LARGE SCALE MRNA] (ISOFORMS 1 AND 2)</scope>
    <source>
        <tissue>Lung</tissue>
    </source>
</reference>
<keyword id="KW-0025">Alternative splicing</keyword>
<keyword id="KW-1003">Cell membrane</keyword>
<keyword id="KW-0472">Membrane</keyword>
<keyword id="KW-1267">Proteomics identification</keyword>
<keyword id="KW-1185">Reference proteome</keyword>
<keyword id="KW-0812">Transmembrane</keyword>
<keyword id="KW-1133">Transmembrane helix</keyword>
<dbReference type="EMBL" id="AF477201">
    <property type="protein sequence ID" value="AAM90843.1"/>
    <property type="molecule type" value="mRNA"/>
</dbReference>
<dbReference type="EMBL" id="AK025935">
    <property type="protein sequence ID" value="BAB15286.1"/>
    <property type="molecule type" value="mRNA"/>
</dbReference>
<dbReference type="EMBL" id="AK292065">
    <property type="protein sequence ID" value="BAF84754.1"/>
    <property type="molecule type" value="mRNA"/>
</dbReference>
<dbReference type="EMBL" id="CH471108">
    <property type="protein sequence ID" value="EAW90655.1"/>
    <property type="molecule type" value="Genomic_DNA"/>
</dbReference>
<dbReference type="EMBL" id="BC009729">
    <property type="protein sequence ID" value="AAH09729.1"/>
    <property type="molecule type" value="mRNA"/>
</dbReference>
<dbReference type="EMBL" id="BC026023">
    <property type="protein sequence ID" value="AAH26023.1"/>
    <property type="molecule type" value="mRNA"/>
</dbReference>
<dbReference type="CCDS" id="CCDS10996.1">
    <molecule id="Q8TBR7-2"/>
</dbReference>
<dbReference type="CCDS" id="CCDS82031.1">
    <molecule id="Q8TBR7-1"/>
</dbReference>
<dbReference type="RefSeq" id="NP_001304935.1">
    <molecule id="Q8TBR7-1"/>
    <property type="nucleotide sequence ID" value="NM_001318006.2"/>
</dbReference>
<dbReference type="RefSeq" id="NP_001304936.1">
    <property type="nucleotide sequence ID" value="NM_001318007.1"/>
</dbReference>
<dbReference type="RefSeq" id="NP_001304937.1">
    <property type="nucleotide sequence ID" value="NM_001318008.1"/>
</dbReference>
<dbReference type="RefSeq" id="NP_079068.1">
    <molecule id="Q8TBR7-2"/>
    <property type="nucleotide sequence ID" value="NM_024792.3"/>
</dbReference>
<dbReference type="SMR" id="Q8TBR7"/>
<dbReference type="BioGRID" id="122941">
    <property type="interactions" value="45"/>
</dbReference>
<dbReference type="FunCoup" id="Q8TBR7">
    <property type="interactions" value="964"/>
</dbReference>
<dbReference type="IntAct" id="Q8TBR7">
    <property type="interactions" value="30"/>
</dbReference>
<dbReference type="STRING" id="9606.ENSP00000312017"/>
<dbReference type="iPTMnet" id="Q8TBR7"/>
<dbReference type="MetOSite" id="Q8TBR7"/>
<dbReference type="PhosphoSitePlus" id="Q8TBR7"/>
<dbReference type="SwissPalm" id="Q8TBR7"/>
<dbReference type="BioMuta" id="FAM57A"/>
<dbReference type="DMDM" id="62512180"/>
<dbReference type="jPOST" id="Q8TBR7"/>
<dbReference type="MassIVE" id="Q8TBR7"/>
<dbReference type="PaxDb" id="9606-ENSP00000312017"/>
<dbReference type="PeptideAtlas" id="Q8TBR7"/>
<dbReference type="ProteomicsDB" id="74042">
    <molecule id="Q8TBR7-2"/>
</dbReference>
<dbReference type="ProteomicsDB" id="74043">
    <molecule id="Q8TBR7-1"/>
</dbReference>
<dbReference type="Pumba" id="Q8TBR7"/>
<dbReference type="Antibodypedia" id="77439">
    <property type="antibodies" value="3 antibodies from 2 providers"/>
</dbReference>
<dbReference type="DNASU" id="79850"/>
<dbReference type="Ensembl" id="ENST00000301324.8">
    <molecule id="Q8TBR7-1"/>
    <property type="protein sequence ID" value="ENSP00000301324.8"/>
    <property type="gene ID" value="ENSG00000167695.15"/>
</dbReference>
<dbReference type="Ensembl" id="ENST00000308278.13">
    <molecule id="Q8TBR7-2"/>
    <property type="protein sequence ID" value="ENSP00000312017.7"/>
    <property type="gene ID" value="ENSG00000167695.15"/>
</dbReference>
<dbReference type="GeneID" id="79850"/>
<dbReference type="KEGG" id="hsa:79850"/>
<dbReference type="MANE-Select" id="ENST00000308278.13">
    <property type="protein sequence ID" value="ENSP00000312017.7"/>
    <property type="RefSeq nucleotide sequence ID" value="NM_024792.3"/>
    <property type="RefSeq protein sequence ID" value="NP_079068.1"/>
</dbReference>
<dbReference type="UCSC" id="uc002frp.4">
    <molecule id="Q8TBR7-2"/>
    <property type="organism name" value="human"/>
</dbReference>
<dbReference type="AGR" id="HGNC:29646"/>
<dbReference type="CTD" id="79850"/>
<dbReference type="DisGeNET" id="79850"/>
<dbReference type="GeneCards" id="TLCD3A"/>
<dbReference type="HGNC" id="HGNC:29646">
    <property type="gene designation" value="TLCD3A"/>
</dbReference>
<dbReference type="HPA" id="ENSG00000167695">
    <property type="expression patterns" value="Tissue enhanced (skin)"/>
</dbReference>
<dbReference type="MIM" id="611627">
    <property type="type" value="gene"/>
</dbReference>
<dbReference type="neXtProt" id="NX_Q8TBR7"/>
<dbReference type="OpenTargets" id="ENSG00000167695"/>
<dbReference type="PharmGKB" id="PA142671861"/>
<dbReference type="VEuPathDB" id="HostDB:ENSG00000167695"/>
<dbReference type="eggNOG" id="KOG4561">
    <property type="taxonomic scope" value="Eukaryota"/>
</dbReference>
<dbReference type="GeneTree" id="ENSGT01010000222313"/>
<dbReference type="HOGENOM" id="CLU_049796_0_0_1"/>
<dbReference type="InParanoid" id="Q8TBR7"/>
<dbReference type="OMA" id="IYDRHWL"/>
<dbReference type="OrthoDB" id="10266980at2759"/>
<dbReference type="PAN-GO" id="Q8TBR7">
    <property type="GO annotations" value="2 GO annotations based on evolutionary models"/>
</dbReference>
<dbReference type="PhylomeDB" id="Q8TBR7"/>
<dbReference type="TreeFam" id="TF324847"/>
<dbReference type="PathwayCommons" id="Q8TBR7"/>
<dbReference type="SignaLink" id="Q8TBR7"/>
<dbReference type="BioGRID-ORCS" id="79850">
    <property type="hits" value="14 hits in 1158 CRISPR screens"/>
</dbReference>
<dbReference type="ChiTaRS" id="FAM57A">
    <property type="organism name" value="human"/>
</dbReference>
<dbReference type="GenomeRNAi" id="79850"/>
<dbReference type="Pharos" id="Q8TBR7">
    <property type="development level" value="Tdark"/>
</dbReference>
<dbReference type="PRO" id="PR:Q8TBR7"/>
<dbReference type="Proteomes" id="UP000005640">
    <property type="component" value="Chromosome 17"/>
</dbReference>
<dbReference type="RNAct" id="Q8TBR7">
    <property type="molecule type" value="protein"/>
</dbReference>
<dbReference type="Bgee" id="ENSG00000167695">
    <property type="expression patterns" value="Expressed in skin of abdomen and 143 other cell types or tissues"/>
</dbReference>
<dbReference type="ExpressionAtlas" id="Q8TBR7">
    <property type="expression patterns" value="baseline and differential"/>
</dbReference>
<dbReference type="GO" id="GO:0005783">
    <property type="term" value="C:endoplasmic reticulum"/>
    <property type="evidence" value="ECO:0000318"/>
    <property type="project" value="GO_Central"/>
</dbReference>
<dbReference type="GO" id="GO:0005886">
    <property type="term" value="C:plasma membrane"/>
    <property type="evidence" value="ECO:0000314"/>
    <property type="project" value="UniProtKB"/>
</dbReference>
<dbReference type="GO" id="GO:0055088">
    <property type="term" value="P:lipid homeostasis"/>
    <property type="evidence" value="ECO:0000318"/>
    <property type="project" value="GO_Central"/>
</dbReference>
<dbReference type="InterPro" id="IPR006634">
    <property type="entry name" value="TLC-dom"/>
</dbReference>
<dbReference type="InterPro" id="IPR050846">
    <property type="entry name" value="TLCD"/>
</dbReference>
<dbReference type="PANTHER" id="PTHR13439">
    <property type="entry name" value="CT120 PROTEIN"/>
    <property type="match status" value="1"/>
</dbReference>
<dbReference type="PANTHER" id="PTHR13439:SF20">
    <property type="entry name" value="TLC DOMAIN-CONTAINING PROTEIN 3A"/>
    <property type="match status" value="1"/>
</dbReference>
<dbReference type="Pfam" id="PF03798">
    <property type="entry name" value="TRAM_LAG1_CLN8"/>
    <property type="match status" value="1"/>
</dbReference>
<dbReference type="SMART" id="SM00724">
    <property type="entry name" value="TLC"/>
    <property type="match status" value="1"/>
</dbReference>
<dbReference type="PROSITE" id="PS50922">
    <property type="entry name" value="TLC"/>
    <property type="match status" value="1"/>
</dbReference>
<name>TLC3A_HUMAN</name>
<protein>
    <recommendedName>
        <fullName evidence="6">TLC domain-containing protein 3A</fullName>
    </recommendedName>
    <alternativeName>
        <fullName evidence="4">Protein CT120</fullName>
    </alternativeName>
    <alternativeName>
        <fullName>Protein FAM57A</fullName>
    </alternativeName>
</protein>
<evidence type="ECO:0000255" key="1"/>
<evidence type="ECO:0000255" key="2">
    <source>
        <dbReference type="PROSITE-ProRule" id="PRU00205"/>
    </source>
</evidence>
<evidence type="ECO:0000269" key="3">
    <source>
    </source>
</evidence>
<evidence type="ECO:0000303" key="4">
    <source>
    </source>
</evidence>
<evidence type="ECO:0000303" key="5">
    <source>
    </source>
</evidence>
<evidence type="ECO:0000305" key="6"/>
<evidence type="ECO:0000312" key="7">
    <source>
        <dbReference type="HGNC" id="HGNC:29646"/>
    </source>
</evidence>
<gene>
    <name evidence="7" type="primary">TLCD3A</name>
    <name type="synonym">FAM57A</name>
</gene>
<sequence length="257" mass="29383">MLLTLAGGALFFPGLFALCTWALRRSQPGWSRTDCVMISTRLVSSVHAVLATGSGIVIIRSCDDVITGRHWLAREYVWFLIPYMIYDSYAMYLCEWCRTRDQNRAPSLTLRNFLSRNRLMITHHAVILFVLVPVAQRLRGDLGDFFVGCIFTAELSTPFVSLGRVLIQLKQQHTLLYKVNGILTLATFLSCRILLFPFMYWSYGRQQGLSLLQVPFSIPFYCNVANAFLVAPQIYWFCLLCRKAVRLFDTPQAKKDG</sequence>
<feature type="chain" id="PRO_0000185540" description="TLC domain-containing protein 3A">
    <location>
        <begin position="1"/>
        <end position="257"/>
    </location>
</feature>
<feature type="transmembrane region" description="Helical" evidence="1">
    <location>
        <begin position="1"/>
        <end position="21"/>
    </location>
</feature>
<feature type="transmembrane region" description="Helical" evidence="1">
    <location>
        <begin position="42"/>
        <end position="62"/>
    </location>
</feature>
<feature type="transmembrane region" description="Helical" evidence="1">
    <location>
        <begin position="77"/>
        <end position="97"/>
    </location>
</feature>
<feature type="transmembrane region" description="Helical" evidence="1">
    <location>
        <begin position="113"/>
        <end position="135"/>
    </location>
</feature>
<feature type="transmembrane region" description="Helical" evidence="1">
    <location>
        <begin position="142"/>
        <end position="162"/>
    </location>
</feature>
<feature type="transmembrane region" description="Helical" evidence="1">
    <location>
        <begin position="181"/>
        <end position="201"/>
    </location>
</feature>
<feature type="transmembrane region" description="Helical" evidence="1">
    <location>
        <begin position="220"/>
        <end position="240"/>
    </location>
</feature>
<feature type="domain" description="TLC" evidence="2">
    <location>
        <begin position="33"/>
        <end position="249"/>
    </location>
</feature>
<feature type="splice variant" id="VSP_008149" description="In isoform 1." evidence="5">
    <location>
        <begin position="137"/>
        <end position="168"/>
    </location>
</feature>
<feature type="sequence conflict" description="In Ref. 1; AAM90843." evidence="6" ref="1">
    <original>R</original>
    <variation>H</variation>
    <location>
        <position position="25"/>
    </location>
</feature>
<feature type="sequence conflict" description="In Ref. 1; AAM90843." evidence="6" ref="1">
    <original>F</original>
    <variation>L</variation>
    <location>
        <position position="129"/>
    </location>
</feature>
<comment type="subunit">
    <text evidence="3">Interacts with GGT7 isoform 3 and SLC3A2.</text>
</comment>
<comment type="subcellular location">
    <subcellularLocation>
        <location>Cell membrane</location>
        <topology>Multi-pass membrane protein</topology>
    </subcellularLocation>
</comment>
<comment type="alternative products">
    <event type="alternative splicing"/>
    <isoform>
        <id>Q8TBR7-2</id>
        <name>2</name>
        <name>CT120A</name>
        <sequence type="displayed"/>
    </isoform>
    <isoform>
        <id>Q8TBR7-1</id>
        <name>1</name>
        <name>CT120B</name>
        <sequence type="described" ref="VSP_008149"/>
    </isoform>
</comment>
<comment type="tissue specificity">
    <text evidence="3">Highly expressed in pancreas. Detected at intermediate levels in heart, placenta and kidney, and at low levels in brain, liver and skeletal muscle. Not detected in normal lung.</text>
</comment>
<comment type="online information" name="Atlas of Genetics and Cytogenetics in Oncology and Haematology">
    <link uri="https://atlasgeneticsoncology.org/gene/40183/FAM57A"/>
</comment>